<accession>P77819</accession>
<accession>Q6I4U1</accession>
<accession>Q6KYI7</accession>
<accession>Q81VT7</accession>
<name>RPOC_BACAN</name>
<proteinExistence type="inferred from homology"/>
<sequence>MIDVNNFEYMKIGLASPDKIRSWSYGEVKKPETINYRTLKPEKDGLFCERIFGPQKDWECHCGKYKRVRYKGVVCDRCGVEVTRAKVRRERMGHIELAAPVSHIWYFKGIPSRMGLVLDMSPRALEEVIYFASYVVTESGDTPLDKKQLLSEKEYRAYRDRYGSTFQAAMGAEAIKKLLQDIDLDKEVDFLKEELKTAQGQRRTRAIKRLEVLEAFRNSGNEPSWMILDVLPVIPPELRPMVQLDGGRFATSDLNDLYRRVINRNNRLKRLLDLGAPSIIVQNEKRMLQEAVDALIDNGRRGRPVTGPGNRPLKSLSHMLKGKQGRFRQNLLGKRVDYSGRSVIVVGPNLKMYQCGLPKEMALELFKPFVMKELVEKGLAHNIKSAKRKIERVQPEVWDVLESVIKEHPVLLNRAPTLHRLGIQAFEPTLVEGRAIRLHPLVCTAYNADFDGDQMAVHVPLSSEAQAEARLLMLAAQNILNPKDGKPVVTPSQDMVLGNYYLTLEREGAIGEGMVFKDANEALLAYQNGYVHLHTRVAVAASAVNNVTFTEEQKNMLLLTTVGKLIFNEILPESFPYINEPTNSNLEKETPAKYFVEKGANIKEIIASREEVAPFSKKILGNIIAEVFKRFKITETSRMLDRMKNLGFKYSTKAGITVGVSDILVLGEKDEILHEAQAKVDNVIKQFRRGLITEEERYDRVISIWSNAKDVIQGKLMKSLNKRNPIFMMSDSGARGNASNFTQLAGMRGLMANPSGRIIELPIKSSFREGLTVLEYFISTHGARKGLADTALKTADSGYLTRRLVDVAQDVIVREDDCGTDRGLLIGAIKEGNEVIESLYDRLVGRFARKTVKHPETGEVLVAENQLITEDIAHIVENSGVETVNIRSAFTCNTRHGVCKKCYGRNLATGTDVEVGEAVGIIAAQSIGEPGTQLTMRTFHTGGVAGDDITQGLPRIQEIFEARNPKGQAVISEIDGVIAAINDVKDRQEVVVQGEVEARTYAIPYGARLKVIPGQKISHGKELTEGSIDPKELLKVTDITAVQEYLLREVQKVYRMQGVEIGDKHVEVMVRQMLRKVRVSDAGETDVLPGTLLDIHQFTDANAKVLLQGKQPATARPVLLGITKASLETDSFLSAASFQETTRVLTDAAIKGKRDELLGLKENVIIGKLVPAGTGMNRYRKVDLVKTTQDDMNVENDEVYVEQ</sequence>
<evidence type="ECO:0000255" key="1">
    <source>
        <dbReference type="HAMAP-Rule" id="MF_01322"/>
    </source>
</evidence>
<evidence type="ECO:0000305" key="2"/>
<comment type="function">
    <text evidence="1">DNA-dependent RNA polymerase catalyzes the transcription of DNA into RNA using the four ribonucleoside triphosphates as substrates.</text>
</comment>
<comment type="catalytic activity">
    <reaction evidence="1">
        <text>RNA(n) + a ribonucleoside 5'-triphosphate = RNA(n+1) + diphosphate</text>
        <dbReference type="Rhea" id="RHEA:21248"/>
        <dbReference type="Rhea" id="RHEA-COMP:14527"/>
        <dbReference type="Rhea" id="RHEA-COMP:17342"/>
        <dbReference type="ChEBI" id="CHEBI:33019"/>
        <dbReference type="ChEBI" id="CHEBI:61557"/>
        <dbReference type="ChEBI" id="CHEBI:140395"/>
        <dbReference type="EC" id="2.7.7.6"/>
    </reaction>
</comment>
<comment type="cofactor">
    <cofactor evidence="1">
        <name>Mg(2+)</name>
        <dbReference type="ChEBI" id="CHEBI:18420"/>
    </cofactor>
    <text evidence="1">Binds 1 Mg(2+) ion per subunit.</text>
</comment>
<comment type="cofactor">
    <cofactor evidence="1">
        <name>Zn(2+)</name>
        <dbReference type="ChEBI" id="CHEBI:29105"/>
    </cofactor>
    <text evidence="1">Binds 2 Zn(2+) ions per subunit.</text>
</comment>
<comment type="subunit">
    <text evidence="1">The RNAP catalytic core consists of 2 alpha, 1 beta, 1 beta' and 1 omega subunit. When a sigma factor is associated with the core the holoenzyme is formed, which can initiate transcription.</text>
</comment>
<comment type="similarity">
    <text evidence="1">Belongs to the RNA polymerase beta' chain family.</text>
</comment>
<comment type="sequence caution" evidence="2">
    <conflict type="erroneous initiation">
        <sequence resource="EMBL-CDS" id="AAT29183"/>
    </conflict>
    <text>Truncated N-terminus.</text>
</comment>
<organism>
    <name type="scientific">Bacillus anthracis</name>
    <dbReference type="NCBI Taxonomy" id="1392"/>
    <lineage>
        <taxon>Bacteria</taxon>
        <taxon>Bacillati</taxon>
        <taxon>Bacillota</taxon>
        <taxon>Bacilli</taxon>
        <taxon>Bacillales</taxon>
        <taxon>Bacillaceae</taxon>
        <taxon>Bacillus</taxon>
        <taxon>Bacillus cereus group</taxon>
    </lineage>
</organism>
<keyword id="KW-0240">DNA-directed RNA polymerase</keyword>
<keyword id="KW-0460">Magnesium</keyword>
<keyword id="KW-0479">Metal-binding</keyword>
<keyword id="KW-0548">Nucleotidyltransferase</keyword>
<keyword id="KW-1185">Reference proteome</keyword>
<keyword id="KW-0804">Transcription</keyword>
<keyword id="KW-0808">Transferase</keyword>
<keyword id="KW-0862">Zinc</keyword>
<protein>
    <recommendedName>
        <fullName evidence="1">DNA-directed RNA polymerase subunit beta'</fullName>
        <shortName evidence="1">RNAP subunit beta'</shortName>
        <ecNumber evidence="1">2.7.7.6</ecNumber>
    </recommendedName>
    <alternativeName>
        <fullName evidence="1">RNA polymerase subunit beta'</fullName>
    </alternativeName>
    <alternativeName>
        <fullName evidence="1">Transcriptase subunit beta'</fullName>
    </alternativeName>
</protein>
<dbReference type="EC" id="2.7.7.6" evidence="1"/>
<dbReference type="EMBL" id="AE016879">
    <property type="protein sequence ID" value="AAP24157.2"/>
    <property type="molecule type" value="Genomic_DNA"/>
</dbReference>
<dbReference type="EMBL" id="AE017334">
    <property type="protein sequence ID" value="AAT29183.1"/>
    <property type="status" value="ALT_INIT"/>
    <property type="molecule type" value="Genomic_DNA"/>
</dbReference>
<dbReference type="EMBL" id="AE017225">
    <property type="protein sequence ID" value="AAT52440.1"/>
    <property type="molecule type" value="Genomic_DNA"/>
</dbReference>
<dbReference type="EMBL" id="X89230">
    <property type="protein sequence ID" value="CAA61514.1"/>
    <property type="molecule type" value="Genomic_DNA"/>
</dbReference>
<dbReference type="RefSeq" id="NP_842671.2">
    <property type="nucleotide sequence ID" value="NC_003997.3"/>
</dbReference>
<dbReference type="RefSeq" id="WP_000567940.1">
    <property type="nucleotide sequence ID" value="NZ_WXXJ01000051.1"/>
</dbReference>
<dbReference type="RefSeq" id="YP_026389.1">
    <property type="nucleotide sequence ID" value="NC_005945.1"/>
</dbReference>
<dbReference type="SMR" id="P77819"/>
<dbReference type="IntAct" id="P77819">
    <property type="interactions" value="3"/>
</dbReference>
<dbReference type="STRING" id="261594.GBAA_0103"/>
<dbReference type="DNASU" id="1086436"/>
<dbReference type="GeneID" id="45020148"/>
<dbReference type="KEGG" id="ban:BA_0103"/>
<dbReference type="KEGG" id="banh:HYU01_00570"/>
<dbReference type="KEGG" id="bar:GBAA_0103"/>
<dbReference type="KEGG" id="bat:BAS0103"/>
<dbReference type="PATRIC" id="fig|198094.11.peg.100"/>
<dbReference type="eggNOG" id="COG0086">
    <property type="taxonomic scope" value="Bacteria"/>
</dbReference>
<dbReference type="HOGENOM" id="CLU_000524_3_1_9"/>
<dbReference type="OMA" id="QDMIIGL"/>
<dbReference type="OrthoDB" id="9815296at2"/>
<dbReference type="Proteomes" id="UP000000427">
    <property type="component" value="Chromosome"/>
</dbReference>
<dbReference type="Proteomes" id="UP000000594">
    <property type="component" value="Chromosome"/>
</dbReference>
<dbReference type="GO" id="GO:0000428">
    <property type="term" value="C:DNA-directed RNA polymerase complex"/>
    <property type="evidence" value="ECO:0007669"/>
    <property type="project" value="UniProtKB-KW"/>
</dbReference>
<dbReference type="GO" id="GO:0003677">
    <property type="term" value="F:DNA binding"/>
    <property type="evidence" value="ECO:0007669"/>
    <property type="project" value="UniProtKB-UniRule"/>
</dbReference>
<dbReference type="GO" id="GO:0003899">
    <property type="term" value="F:DNA-directed RNA polymerase activity"/>
    <property type="evidence" value="ECO:0007669"/>
    <property type="project" value="UniProtKB-UniRule"/>
</dbReference>
<dbReference type="GO" id="GO:0000287">
    <property type="term" value="F:magnesium ion binding"/>
    <property type="evidence" value="ECO:0007669"/>
    <property type="project" value="UniProtKB-UniRule"/>
</dbReference>
<dbReference type="GO" id="GO:0008270">
    <property type="term" value="F:zinc ion binding"/>
    <property type="evidence" value="ECO:0007669"/>
    <property type="project" value="UniProtKB-UniRule"/>
</dbReference>
<dbReference type="GO" id="GO:0006351">
    <property type="term" value="P:DNA-templated transcription"/>
    <property type="evidence" value="ECO:0007669"/>
    <property type="project" value="UniProtKB-UniRule"/>
</dbReference>
<dbReference type="CDD" id="cd02655">
    <property type="entry name" value="RNAP_beta'_C"/>
    <property type="match status" value="1"/>
</dbReference>
<dbReference type="CDD" id="cd01609">
    <property type="entry name" value="RNAP_beta'_N"/>
    <property type="match status" value="1"/>
</dbReference>
<dbReference type="FunFam" id="1.10.150.390:FF:000002">
    <property type="entry name" value="DNA-directed RNA polymerase subunit beta"/>
    <property type="match status" value="1"/>
</dbReference>
<dbReference type="FunFam" id="1.10.40.90:FF:000001">
    <property type="entry name" value="DNA-directed RNA polymerase subunit beta"/>
    <property type="match status" value="1"/>
</dbReference>
<dbReference type="FunFam" id="4.10.860.120:FF:000001">
    <property type="entry name" value="DNA-directed RNA polymerase subunit beta"/>
    <property type="match status" value="1"/>
</dbReference>
<dbReference type="Gene3D" id="1.10.132.30">
    <property type="match status" value="1"/>
</dbReference>
<dbReference type="Gene3D" id="1.10.150.390">
    <property type="match status" value="1"/>
</dbReference>
<dbReference type="Gene3D" id="1.10.1790.20">
    <property type="match status" value="1"/>
</dbReference>
<dbReference type="Gene3D" id="1.10.40.90">
    <property type="match status" value="1"/>
</dbReference>
<dbReference type="Gene3D" id="2.40.40.20">
    <property type="match status" value="1"/>
</dbReference>
<dbReference type="Gene3D" id="2.40.50.100">
    <property type="match status" value="1"/>
</dbReference>
<dbReference type="Gene3D" id="4.10.860.120">
    <property type="entry name" value="RNA polymerase II, clamp domain"/>
    <property type="match status" value="1"/>
</dbReference>
<dbReference type="Gene3D" id="1.10.274.100">
    <property type="entry name" value="RNA polymerase Rpb1, domain 3"/>
    <property type="match status" value="1"/>
</dbReference>
<dbReference type="HAMAP" id="MF_01322">
    <property type="entry name" value="RNApol_bact_RpoC"/>
    <property type="match status" value="1"/>
</dbReference>
<dbReference type="InterPro" id="IPR045867">
    <property type="entry name" value="DNA-dir_RpoC_beta_prime"/>
</dbReference>
<dbReference type="InterPro" id="IPR012754">
    <property type="entry name" value="DNA-dir_RpoC_beta_prime_bact"/>
</dbReference>
<dbReference type="InterPro" id="IPR000722">
    <property type="entry name" value="RNA_pol_asu"/>
</dbReference>
<dbReference type="InterPro" id="IPR006592">
    <property type="entry name" value="RNA_pol_N"/>
</dbReference>
<dbReference type="InterPro" id="IPR007080">
    <property type="entry name" value="RNA_pol_Rpb1_1"/>
</dbReference>
<dbReference type="InterPro" id="IPR007066">
    <property type="entry name" value="RNA_pol_Rpb1_3"/>
</dbReference>
<dbReference type="InterPro" id="IPR042102">
    <property type="entry name" value="RNA_pol_Rpb1_3_sf"/>
</dbReference>
<dbReference type="InterPro" id="IPR007083">
    <property type="entry name" value="RNA_pol_Rpb1_4"/>
</dbReference>
<dbReference type="InterPro" id="IPR007081">
    <property type="entry name" value="RNA_pol_Rpb1_5"/>
</dbReference>
<dbReference type="InterPro" id="IPR044893">
    <property type="entry name" value="RNA_pol_Rpb1_clamp_domain"/>
</dbReference>
<dbReference type="InterPro" id="IPR038120">
    <property type="entry name" value="Rpb1_funnel_sf"/>
</dbReference>
<dbReference type="NCBIfam" id="TIGR02386">
    <property type="entry name" value="rpoC_TIGR"/>
    <property type="match status" value="1"/>
</dbReference>
<dbReference type="PANTHER" id="PTHR19376">
    <property type="entry name" value="DNA-DIRECTED RNA POLYMERASE"/>
    <property type="match status" value="1"/>
</dbReference>
<dbReference type="PANTHER" id="PTHR19376:SF54">
    <property type="entry name" value="DNA-DIRECTED RNA POLYMERASE SUBUNIT BETA"/>
    <property type="match status" value="1"/>
</dbReference>
<dbReference type="Pfam" id="PF04997">
    <property type="entry name" value="RNA_pol_Rpb1_1"/>
    <property type="match status" value="1"/>
</dbReference>
<dbReference type="Pfam" id="PF00623">
    <property type="entry name" value="RNA_pol_Rpb1_2"/>
    <property type="match status" value="2"/>
</dbReference>
<dbReference type="Pfam" id="PF04983">
    <property type="entry name" value="RNA_pol_Rpb1_3"/>
    <property type="match status" value="1"/>
</dbReference>
<dbReference type="Pfam" id="PF05000">
    <property type="entry name" value="RNA_pol_Rpb1_4"/>
    <property type="match status" value="1"/>
</dbReference>
<dbReference type="Pfam" id="PF04998">
    <property type="entry name" value="RNA_pol_Rpb1_5"/>
    <property type="match status" value="1"/>
</dbReference>
<dbReference type="SMART" id="SM00663">
    <property type="entry name" value="RPOLA_N"/>
    <property type="match status" value="1"/>
</dbReference>
<dbReference type="SUPFAM" id="SSF64484">
    <property type="entry name" value="beta and beta-prime subunits of DNA dependent RNA-polymerase"/>
    <property type="match status" value="1"/>
</dbReference>
<gene>
    <name evidence="1" type="primary">rpoC</name>
    <name type="ordered locus">BA_0103</name>
    <name type="ordered locus">GBAA_0103</name>
    <name type="ordered locus">BAS0103</name>
</gene>
<reference key="1">
    <citation type="journal article" date="2003" name="Nature">
        <title>The genome sequence of Bacillus anthracis Ames and comparison to closely related bacteria.</title>
        <authorList>
            <person name="Read T.D."/>
            <person name="Peterson S.N."/>
            <person name="Tourasse N.J."/>
            <person name="Baillie L.W."/>
            <person name="Paulsen I.T."/>
            <person name="Nelson K.E."/>
            <person name="Tettelin H."/>
            <person name="Fouts D.E."/>
            <person name="Eisen J.A."/>
            <person name="Gill S.R."/>
            <person name="Holtzapple E.K."/>
            <person name="Okstad O.A."/>
            <person name="Helgason E."/>
            <person name="Rilstone J."/>
            <person name="Wu M."/>
            <person name="Kolonay J.F."/>
            <person name="Beanan M.J."/>
            <person name="Dodson R.J."/>
            <person name="Brinkac L.M."/>
            <person name="Gwinn M.L."/>
            <person name="DeBoy R.T."/>
            <person name="Madpu R."/>
            <person name="Daugherty S.C."/>
            <person name="Durkin A.S."/>
            <person name="Haft D.H."/>
            <person name="Nelson W.C."/>
            <person name="Peterson J.D."/>
            <person name="Pop M."/>
            <person name="Khouri H.M."/>
            <person name="Radune D."/>
            <person name="Benton J.L."/>
            <person name="Mahamoud Y."/>
            <person name="Jiang L."/>
            <person name="Hance I.R."/>
            <person name="Weidman J.F."/>
            <person name="Berry K.J."/>
            <person name="Plaut R.D."/>
            <person name="Wolf A.M."/>
            <person name="Watkins K.L."/>
            <person name="Nierman W.C."/>
            <person name="Hazen A."/>
            <person name="Cline R.T."/>
            <person name="Redmond C."/>
            <person name="Thwaite J.E."/>
            <person name="White O."/>
            <person name="Salzberg S.L."/>
            <person name="Thomason B."/>
            <person name="Friedlander A.M."/>
            <person name="Koehler T.M."/>
            <person name="Hanna P.C."/>
            <person name="Kolstoe A.-B."/>
            <person name="Fraser C.M."/>
        </authorList>
    </citation>
    <scope>NUCLEOTIDE SEQUENCE [LARGE SCALE GENOMIC DNA]</scope>
    <source>
        <strain>Ames / isolate Porton</strain>
    </source>
</reference>
<reference key="2">
    <citation type="journal article" date="2009" name="J. Bacteriol.">
        <title>The complete genome sequence of Bacillus anthracis Ames 'Ancestor'.</title>
        <authorList>
            <person name="Ravel J."/>
            <person name="Jiang L."/>
            <person name="Stanley S.T."/>
            <person name="Wilson M.R."/>
            <person name="Decker R.S."/>
            <person name="Read T.D."/>
            <person name="Worsham P."/>
            <person name="Keim P.S."/>
            <person name="Salzberg S.L."/>
            <person name="Fraser-Liggett C.M."/>
            <person name="Rasko D.A."/>
        </authorList>
    </citation>
    <scope>NUCLEOTIDE SEQUENCE [LARGE SCALE GENOMIC DNA]</scope>
    <source>
        <strain>Ames ancestor</strain>
    </source>
</reference>
<reference key="3">
    <citation type="submission" date="2004-01" db="EMBL/GenBank/DDBJ databases">
        <title>Complete genome sequence of Bacillus anthracis Sterne.</title>
        <authorList>
            <person name="Brettin T.S."/>
            <person name="Bruce D."/>
            <person name="Challacombe J.F."/>
            <person name="Gilna P."/>
            <person name="Han C."/>
            <person name="Hill K."/>
            <person name="Hitchcock P."/>
            <person name="Jackson P."/>
            <person name="Keim P."/>
            <person name="Longmire J."/>
            <person name="Lucas S."/>
            <person name="Okinaka R."/>
            <person name="Richardson P."/>
            <person name="Rubin E."/>
            <person name="Tice H."/>
        </authorList>
    </citation>
    <scope>NUCLEOTIDE SEQUENCE [LARGE SCALE GENOMIC DNA]</scope>
    <source>
        <strain>Sterne</strain>
    </source>
</reference>
<reference key="4">
    <citation type="submission" date="1996-08" db="EMBL/GenBank/DDBJ databases">
        <title>Cloning part of the rpoC gene encoding the B' subunit of the DNA-dependent RNA polymerase from some Gram-positive bacteria and comparative amino acid sequence.</title>
        <authorList>
            <person name="Morse R."/>
            <person name="Collins M.D."/>
            <person name="Balsdon J.T."/>
            <person name="Reading S."/>
            <person name="Richardson P.T."/>
        </authorList>
    </citation>
    <scope>NUCLEOTIDE SEQUENCE [GENOMIC DNA] OF 1-1052</scope>
    <source>
        <strain>ATCC 14578 / CIP 66.17 / NCTC 10340</strain>
    </source>
</reference>
<feature type="chain" id="PRO_0000067703" description="DNA-directed RNA polymerase subunit beta'">
    <location>
        <begin position="1"/>
        <end position="1203"/>
    </location>
</feature>
<feature type="binding site" evidence="1">
    <location>
        <position position="60"/>
    </location>
    <ligand>
        <name>Zn(2+)</name>
        <dbReference type="ChEBI" id="CHEBI:29105"/>
        <label>1</label>
    </ligand>
</feature>
<feature type="binding site" evidence="1">
    <location>
        <position position="62"/>
    </location>
    <ligand>
        <name>Zn(2+)</name>
        <dbReference type="ChEBI" id="CHEBI:29105"/>
        <label>1</label>
    </ligand>
</feature>
<feature type="binding site" evidence="1">
    <location>
        <position position="75"/>
    </location>
    <ligand>
        <name>Zn(2+)</name>
        <dbReference type="ChEBI" id="CHEBI:29105"/>
        <label>1</label>
    </ligand>
</feature>
<feature type="binding site" evidence="1">
    <location>
        <position position="78"/>
    </location>
    <ligand>
        <name>Zn(2+)</name>
        <dbReference type="ChEBI" id="CHEBI:29105"/>
        <label>1</label>
    </ligand>
</feature>
<feature type="binding site" evidence="1">
    <location>
        <position position="449"/>
    </location>
    <ligand>
        <name>Mg(2+)</name>
        <dbReference type="ChEBI" id="CHEBI:18420"/>
    </ligand>
</feature>
<feature type="binding site" evidence="1">
    <location>
        <position position="451"/>
    </location>
    <ligand>
        <name>Mg(2+)</name>
        <dbReference type="ChEBI" id="CHEBI:18420"/>
    </ligand>
</feature>
<feature type="binding site" evidence="1">
    <location>
        <position position="453"/>
    </location>
    <ligand>
        <name>Mg(2+)</name>
        <dbReference type="ChEBI" id="CHEBI:18420"/>
    </ligand>
</feature>
<feature type="binding site" evidence="1">
    <location>
        <position position="818"/>
    </location>
    <ligand>
        <name>Zn(2+)</name>
        <dbReference type="ChEBI" id="CHEBI:29105"/>
        <label>2</label>
    </ligand>
</feature>
<feature type="binding site" evidence="1">
    <location>
        <position position="892"/>
    </location>
    <ligand>
        <name>Zn(2+)</name>
        <dbReference type="ChEBI" id="CHEBI:29105"/>
        <label>2</label>
    </ligand>
</feature>
<feature type="binding site" evidence="1">
    <location>
        <position position="899"/>
    </location>
    <ligand>
        <name>Zn(2+)</name>
        <dbReference type="ChEBI" id="CHEBI:29105"/>
        <label>2</label>
    </ligand>
</feature>
<feature type="binding site" evidence="1">
    <location>
        <position position="902"/>
    </location>
    <ligand>
        <name>Zn(2+)</name>
        <dbReference type="ChEBI" id="CHEBI:29105"/>
        <label>2</label>
    </ligand>
</feature>